<feature type="chain" id="PRO_0000115135" description="DNA mismatch repair protein MutS">
    <location>
        <begin position="1"/>
        <end position="872"/>
    </location>
</feature>
<feature type="binding site" evidence="2">
    <location>
        <begin position="602"/>
        <end position="609"/>
    </location>
    <ligand>
        <name>ATP</name>
        <dbReference type="ChEBI" id="CHEBI:30616"/>
    </ligand>
</feature>
<reference key="1">
    <citation type="submission" date="2003-06" db="EMBL/GenBank/DDBJ databases">
        <title>Intact mutS gene in laboratory-derived and clinical glycopeptide-intermediate Staphylococcus aureus strains.</title>
        <authorList>
            <person name="Muthaiyan A."/>
            <person name="Jayaswal R.K."/>
            <person name="Wilkinson B.J."/>
        </authorList>
    </citation>
    <scope>NUCLEOTIDE SEQUENCE [GENOMIC DNA]</scope>
</reference>
<reference key="2">
    <citation type="journal article" date="2005" name="J. Bacteriol.">
        <title>Insights on evolution of virulence and resistance from the complete genome analysis of an early methicillin-resistant Staphylococcus aureus strain and a biofilm-producing methicillin-resistant Staphylococcus epidermidis strain.</title>
        <authorList>
            <person name="Gill S.R."/>
            <person name="Fouts D.E."/>
            <person name="Archer G.L."/>
            <person name="Mongodin E.F."/>
            <person name="DeBoy R.T."/>
            <person name="Ravel J."/>
            <person name="Paulsen I.T."/>
            <person name="Kolonay J.F."/>
            <person name="Brinkac L.M."/>
            <person name="Beanan M.J."/>
            <person name="Dodson R.J."/>
            <person name="Daugherty S.C."/>
            <person name="Madupu R."/>
            <person name="Angiuoli S.V."/>
            <person name="Durkin A.S."/>
            <person name="Haft D.H."/>
            <person name="Vamathevan J.J."/>
            <person name="Khouri H."/>
            <person name="Utterback T.R."/>
            <person name="Lee C."/>
            <person name="Dimitrov G."/>
            <person name="Jiang L."/>
            <person name="Qin H."/>
            <person name="Weidman J."/>
            <person name="Tran K."/>
            <person name="Kang K.H."/>
            <person name="Hance I.R."/>
            <person name="Nelson K.E."/>
            <person name="Fraser C.M."/>
        </authorList>
    </citation>
    <scope>NUCLEOTIDE SEQUENCE [LARGE SCALE GENOMIC DNA]</scope>
    <source>
        <strain>COL</strain>
    </source>
</reference>
<gene>
    <name type="primary">mutS</name>
    <name type="ordered locus">SACOL1315</name>
</gene>
<evidence type="ECO:0000250" key="1"/>
<evidence type="ECO:0000255" key="2"/>
<evidence type="ECO:0000305" key="3"/>
<sequence length="872" mass="99904">MSNVTPMMQQYLKIKSEYQDCLLFFRLGDFYEMFYEDAKEASRVLEITLTKRDAKKENPIPMCGVPYHSADSYIDTLVNNGYKVAICEQMEDPKQTKGMVRREVVRIVTPGTVMEQGGVDDKQNNYILSFVMNQPEIALSYCDVSTGELKVTHFNDEATLLNEITTINPNEVVINDNISDNLKRQINMVTETITVRETLSSEIYSVNQTEHKLMYQATQLLLDYIHHTQKRDLSHIEDVVQYAAIDYMKMDFYAKRNLELTESIRLKSKKGTLLWLMDETKTPMGARRLKQWIDRPLISKEQIEARLDIVDEFSAHFIERDTLRTYLNQVYDIERLVGRVSYGNVNARDLIQLKHSISEIPNIKALLNSMNQNTLVQVNQLEPLDDLLDILEQSLVEEPPISVKDGGLFKVGFNTQLDEYLEASKNGKTWLAELQAKERQRTGIKSLKISFNKVFGYFIEITRANLQNFEPSEFGYMRKQTLSNAERFITDELKEKEDIILGAEDKAIELEYQLFVQLREEVKKYTERLQQQAKIISELDCLQSFAEIAQKYNYTRPSFSENKTLELVESRHPVVERVMDYNDYVPNNCRLDNETFIYLITGPNMSGKSTYMRQVAIISIMAQMGAYVPCKEAVLPIFDQIFTRIGAADDLVSGKSTFMVEMLEAQKALTYATEDSLIIFDEIGRGTSTYDGLALAQAMIEYVAETSHAKTLFSTHYHELTTLDQALPSLKNVHVAANEYKGELIFLHKVKDGAVDDSYGIQVAKLADLPEKVISRAQVILSEFEASAGKKSSISNLKMVENEPEINQENLNLSVEETTDTLSQKDFEQASFDLFENDQESEIELQIKNLNLSNMTPIEALVKLSELQNQLK</sequence>
<keyword id="KW-0067">ATP-binding</keyword>
<keyword id="KW-0227">DNA damage</keyword>
<keyword id="KW-0234">DNA repair</keyword>
<keyword id="KW-0238">DNA-binding</keyword>
<keyword id="KW-0547">Nucleotide-binding</keyword>
<comment type="function">
    <text evidence="1">This protein is involved in the repair of mismatches in DNA. It is possible that it carries out the mismatch recognition step. This protein has a weak ATPase activity (By similarity).</text>
</comment>
<comment type="similarity">
    <text evidence="3">Belongs to the DNA mismatch repair MutS family.</text>
</comment>
<protein>
    <recommendedName>
        <fullName>DNA mismatch repair protein MutS</fullName>
    </recommendedName>
</protein>
<dbReference type="EMBL" id="AY324087">
    <property type="protein sequence ID" value="AAP87082.1"/>
    <property type="molecule type" value="Genomic_DNA"/>
</dbReference>
<dbReference type="EMBL" id="CP000046">
    <property type="protein sequence ID" value="AAW38145.1"/>
    <property type="molecule type" value="Genomic_DNA"/>
</dbReference>
<dbReference type="RefSeq" id="WP_000073352.1">
    <property type="nucleotide sequence ID" value="NZ_JBGOFO010000002.1"/>
</dbReference>
<dbReference type="SMR" id="Q5HGD6"/>
<dbReference type="KEGG" id="sac:SACOL1315"/>
<dbReference type="HOGENOM" id="CLU_002472_4_0_9"/>
<dbReference type="Proteomes" id="UP000000530">
    <property type="component" value="Chromosome"/>
</dbReference>
<dbReference type="GO" id="GO:0005829">
    <property type="term" value="C:cytosol"/>
    <property type="evidence" value="ECO:0007669"/>
    <property type="project" value="TreeGrafter"/>
</dbReference>
<dbReference type="GO" id="GO:0005524">
    <property type="term" value="F:ATP binding"/>
    <property type="evidence" value="ECO:0007669"/>
    <property type="project" value="UniProtKB-UniRule"/>
</dbReference>
<dbReference type="GO" id="GO:0140664">
    <property type="term" value="F:ATP-dependent DNA damage sensor activity"/>
    <property type="evidence" value="ECO:0007669"/>
    <property type="project" value="InterPro"/>
</dbReference>
<dbReference type="GO" id="GO:0003684">
    <property type="term" value="F:damaged DNA binding"/>
    <property type="evidence" value="ECO:0007669"/>
    <property type="project" value="UniProtKB-UniRule"/>
</dbReference>
<dbReference type="GO" id="GO:0030983">
    <property type="term" value="F:mismatched DNA binding"/>
    <property type="evidence" value="ECO:0007669"/>
    <property type="project" value="InterPro"/>
</dbReference>
<dbReference type="GO" id="GO:0006298">
    <property type="term" value="P:mismatch repair"/>
    <property type="evidence" value="ECO:0007669"/>
    <property type="project" value="UniProtKB-UniRule"/>
</dbReference>
<dbReference type="CDD" id="cd03284">
    <property type="entry name" value="ABC_MutS1"/>
    <property type="match status" value="1"/>
</dbReference>
<dbReference type="FunFam" id="1.10.1420.10:FF:000007">
    <property type="entry name" value="DNA mismatch repair protein MutS"/>
    <property type="match status" value="1"/>
</dbReference>
<dbReference type="FunFam" id="3.40.1170.10:FF:000001">
    <property type="entry name" value="DNA mismatch repair protein MutS"/>
    <property type="match status" value="1"/>
</dbReference>
<dbReference type="FunFam" id="3.40.50.300:FF:000896">
    <property type="entry name" value="DNA mismatch repair protein MutS"/>
    <property type="match status" value="1"/>
</dbReference>
<dbReference type="Gene3D" id="1.10.1420.10">
    <property type="match status" value="2"/>
</dbReference>
<dbReference type="Gene3D" id="3.40.1170.10">
    <property type="entry name" value="DNA repair protein MutS, domain I"/>
    <property type="match status" value="1"/>
</dbReference>
<dbReference type="Gene3D" id="3.30.420.110">
    <property type="entry name" value="MutS, connector domain"/>
    <property type="match status" value="1"/>
</dbReference>
<dbReference type="Gene3D" id="3.40.50.300">
    <property type="entry name" value="P-loop containing nucleotide triphosphate hydrolases"/>
    <property type="match status" value="1"/>
</dbReference>
<dbReference type="HAMAP" id="MF_00096">
    <property type="entry name" value="MutS"/>
    <property type="match status" value="1"/>
</dbReference>
<dbReference type="InterPro" id="IPR005748">
    <property type="entry name" value="DNA_mismatch_repair_MutS"/>
</dbReference>
<dbReference type="InterPro" id="IPR007695">
    <property type="entry name" value="DNA_mismatch_repair_MutS-lik_N"/>
</dbReference>
<dbReference type="InterPro" id="IPR017261">
    <property type="entry name" value="DNA_mismatch_repair_MutS/MSH"/>
</dbReference>
<dbReference type="InterPro" id="IPR000432">
    <property type="entry name" value="DNA_mismatch_repair_MutS_C"/>
</dbReference>
<dbReference type="InterPro" id="IPR007861">
    <property type="entry name" value="DNA_mismatch_repair_MutS_clamp"/>
</dbReference>
<dbReference type="InterPro" id="IPR007696">
    <property type="entry name" value="DNA_mismatch_repair_MutS_core"/>
</dbReference>
<dbReference type="InterPro" id="IPR016151">
    <property type="entry name" value="DNA_mismatch_repair_MutS_N"/>
</dbReference>
<dbReference type="InterPro" id="IPR036187">
    <property type="entry name" value="DNA_mismatch_repair_MutS_sf"/>
</dbReference>
<dbReference type="InterPro" id="IPR007860">
    <property type="entry name" value="DNA_mmatch_repair_MutS_con_dom"/>
</dbReference>
<dbReference type="InterPro" id="IPR045076">
    <property type="entry name" value="MutS"/>
</dbReference>
<dbReference type="InterPro" id="IPR036678">
    <property type="entry name" value="MutS_con_dom_sf"/>
</dbReference>
<dbReference type="InterPro" id="IPR027417">
    <property type="entry name" value="P-loop_NTPase"/>
</dbReference>
<dbReference type="NCBIfam" id="TIGR01070">
    <property type="entry name" value="mutS1"/>
    <property type="match status" value="1"/>
</dbReference>
<dbReference type="NCBIfam" id="NF003810">
    <property type="entry name" value="PRK05399.1"/>
    <property type="match status" value="1"/>
</dbReference>
<dbReference type="PANTHER" id="PTHR11361:SF34">
    <property type="entry name" value="DNA MISMATCH REPAIR PROTEIN MSH1, MITOCHONDRIAL"/>
    <property type="match status" value="1"/>
</dbReference>
<dbReference type="PANTHER" id="PTHR11361">
    <property type="entry name" value="DNA MISMATCH REPAIR PROTEIN MUTS FAMILY MEMBER"/>
    <property type="match status" value="1"/>
</dbReference>
<dbReference type="Pfam" id="PF01624">
    <property type="entry name" value="MutS_I"/>
    <property type="match status" value="1"/>
</dbReference>
<dbReference type="Pfam" id="PF05188">
    <property type="entry name" value="MutS_II"/>
    <property type="match status" value="1"/>
</dbReference>
<dbReference type="Pfam" id="PF05192">
    <property type="entry name" value="MutS_III"/>
    <property type="match status" value="1"/>
</dbReference>
<dbReference type="Pfam" id="PF05190">
    <property type="entry name" value="MutS_IV"/>
    <property type="match status" value="1"/>
</dbReference>
<dbReference type="Pfam" id="PF00488">
    <property type="entry name" value="MutS_V"/>
    <property type="match status" value="1"/>
</dbReference>
<dbReference type="PIRSF" id="PIRSF037677">
    <property type="entry name" value="DNA_mis_repair_Msh6"/>
    <property type="match status" value="1"/>
</dbReference>
<dbReference type="SMART" id="SM00534">
    <property type="entry name" value="MUTSac"/>
    <property type="match status" value="1"/>
</dbReference>
<dbReference type="SMART" id="SM00533">
    <property type="entry name" value="MUTSd"/>
    <property type="match status" value="1"/>
</dbReference>
<dbReference type="SUPFAM" id="SSF55271">
    <property type="entry name" value="DNA repair protein MutS, domain I"/>
    <property type="match status" value="1"/>
</dbReference>
<dbReference type="SUPFAM" id="SSF53150">
    <property type="entry name" value="DNA repair protein MutS, domain II"/>
    <property type="match status" value="1"/>
</dbReference>
<dbReference type="SUPFAM" id="SSF48334">
    <property type="entry name" value="DNA repair protein MutS, domain III"/>
    <property type="match status" value="1"/>
</dbReference>
<dbReference type="SUPFAM" id="SSF52540">
    <property type="entry name" value="P-loop containing nucleoside triphosphate hydrolases"/>
    <property type="match status" value="1"/>
</dbReference>
<dbReference type="PROSITE" id="PS00486">
    <property type="entry name" value="DNA_MISMATCH_REPAIR_2"/>
    <property type="match status" value="1"/>
</dbReference>
<proteinExistence type="inferred from homology"/>
<name>MUTS_STAAC</name>
<organism>
    <name type="scientific">Staphylococcus aureus (strain COL)</name>
    <dbReference type="NCBI Taxonomy" id="93062"/>
    <lineage>
        <taxon>Bacteria</taxon>
        <taxon>Bacillati</taxon>
        <taxon>Bacillota</taxon>
        <taxon>Bacilli</taxon>
        <taxon>Bacillales</taxon>
        <taxon>Staphylococcaceae</taxon>
        <taxon>Staphylococcus</taxon>
    </lineage>
</organism>
<accession>Q5HGD6</accession>